<reference key="1">
    <citation type="journal article" date="2004" name="Genome Res.">
        <title>The status, quality, and expansion of the NIH full-length cDNA project: the Mammalian Gene Collection (MGC).</title>
        <authorList>
            <consortium name="The MGC Project Team"/>
        </authorList>
    </citation>
    <scope>NUCLEOTIDE SEQUENCE [LARGE SCALE MRNA]</scope>
    <source>
        <tissue>Brain</tissue>
    </source>
</reference>
<feature type="chain" id="PRO_0000368222" description="Overexpressed in colon carcinoma 1 protein homolog">
    <location>
        <begin position="1"/>
        <end position="63"/>
    </location>
</feature>
<feature type="region of interest" description="Disordered" evidence="1">
    <location>
        <begin position="1"/>
        <end position="39"/>
    </location>
</feature>
<feature type="compositionally biased region" description="Polar residues" evidence="1">
    <location>
        <begin position="1"/>
        <end position="10"/>
    </location>
</feature>
<name>OCC1_MOUSE</name>
<evidence type="ECO:0000256" key="1">
    <source>
        <dbReference type="SAM" id="MobiDB-lite"/>
    </source>
</evidence>
<evidence type="ECO:0000305" key="2"/>
<comment type="similarity">
    <text evidence="2">Belongs to the OCC1 family.</text>
</comment>
<sequence length="63" mass="6453">MGCGNSTATSAAAGRGPTGAVKDTTEDSITEDDKRRNYGGVYVGLPSEAVNMASSQTKTVQKN</sequence>
<proteinExistence type="inferred from homology"/>
<dbReference type="EMBL" id="BC048550">
    <property type="status" value="NOT_ANNOTATED_CDS"/>
    <property type="molecule type" value="mRNA"/>
</dbReference>
<dbReference type="CCDS" id="CCDS48656.1"/>
<dbReference type="RefSeq" id="NP_001138670.1">
    <property type="nucleotide sequence ID" value="NM_001145198.1"/>
</dbReference>
<dbReference type="FunCoup" id="P0C913">
    <property type="interactions" value="5"/>
</dbReference>
<dbReference type="STRING" id="10090.ENSMUSP00000129542"/>
<dbReference type="GlyGen" id="P0C913">
    <property type="glycosylation" value="1 site"/>
</dbReference>
<dbReference type="iPTMnet" id="P0C913"/>
<dbReference type="PhosphoSitePlus" id="P0C913"/>
<dbReference type="PaxDb" id="10090-ENSMUSP00000129542"/>
<dbReference type="PeptideAtlas" id="P0C913"/>
<dbReference type="Antibodypedia" id="54774">
    <property type="antibodies" value="113 antibodies from 23 providers"/>
</dbReference>
<dbReference type="Ensembl" id="ENSMUST00000150459.3">
    <property type="protein sequence ID" value="ENSMUSP00000129542.2"/>
    <property type="gene ID" value="ENSMUSG00000087651.4"/>
</dbReference>
<dbReference type="GeneID" id="69784"/>
<dbReference type="KEGG" id="mmu:69784"/>
<dbReference type="UCSC" id="uc007gkm.2">
    <property type="organism name" value="mouse"/>
</dbReference>
<dbReference type="AGR" id="MGI:1917034"/>
<dbReference type="MGI" id="MGI:1917034">
    <property type="gene designation" value="1500009L16Rik"/>
</dbReference>
<dbReference type="VEuPathDB" id="HostDB:ENSMUSG00000087651"/>
<dbReference type="eggNOG" id="ENOG502SSZ4">
    <property type="taxonomic scope" value="Eukaryota"/>
</dbReference>
<dbReference type="GeneTree" id="ENSGT00610000087444"/>
<dbReference type="HOGENOM" id="CLU_189545_0_0_1"/>
<dbReference type="InParanoid" id="P0C913"/>
<dbReference type="OMA" id="MTQERAC"/>
<dbReference type="OrthoDB" id="8909183at2759"/>
<dbReference type="PhylomeDB" id="P0C913"/>
<dbReference type="BioGRID-ORCS" id="69784">
    <property type="hits" value="0 hits in 75 CRISPR screens"/>
</dbReference>
<dbReference type="PRO" id="PR:P0C913"/>
<dbReference type="Proteomes" id="UP000000589">
    <property type="component" value="Chromosome 10"/>
</dbReference>
<dbReference type="RNAct" id="P0C913">
    <property type="molecule type" value="protein"/>
</dbReference>
<dbReference type="Bgee" id="ENSMUSG00000087651">
    <property type="expression patterns" value="Expressed in manus and 182 other cell types or tissues"/>
</dbReference>
<dbReference type="ExpressionAtlas" id="P0C913">
    <property type="expression patterns" value="baseline and differential"/>
</dbReference>
<dbReference type="InterPro" id="IPR029133">
    <property type="entry name" value="OCC1"/>
</dbReference>
<dbReference type="PANTHER" id="PTHR38502">
    <property type="entry name" value="OVEREXPRESSED IN COLON CARCINOMA 1 PROTEIN"/>
    <property type="match status" value="1"/>
</dbReference>
<dbReference type="PANTHER" id="PTHR38502:SF1">
    <property type="entry name" value="OVEREXPRESSED IN COLON CARCINOMA 1 PROTEIN"/>
    <property type="match status" value="1"/>
</dbReference>
<dbReference type="Pfam" id="PF15506">
    <property type="entry name" value="OCC1"/>
    <property type="match status" value="1"/>
</dbReference>
<organism>
    <name type="scientific">Mus musculus</name>
    <name type="common">Mouse</name>
    <dbReference type="NCBI Taxonomy" id="10090"/>
    <lineage>
        <taxon>Eukaryota</taxon>
        <taxon>Metazoa</taxon>
        <taxon>Chordata</taxon>
        <taxon>Craniata</taxon>
        <taxon>Vertebrata</taxon>
        <taxon>Euteleostomi</taxon>
        <taxon>Mammalia</taxon>
        <taxon>Eutheria</taxon>
        <taxon>Euarchontoglires</taxon>
        <taxon>Glires</taxon>
        <taxon>Rodentia</taxon>
        <taxon>Myomorpha</taxon>
        <taxon>Muroidea</taxon>
        <taxon>Muridae</taxon>
        <taxon>Murinae</taxon>
        <taxon>Mus</taxon>
        <taxon>Mus</taxon>
    </lineage>
</organism>
<keyword id="KW-1185">Reference proteome</keyword>
<protein>
    <recommendedName>
        <fullName>Overexpressed in colon carcinoma 1 protein homolog</fullName>
        <shortName>OCC-1</shortName>
    </recommendedName>
</protein>
<accession>P0C913</accession>